<protein>
    <recommendedName>
        <fullName evidence="1">SAGA-associated factor 11</fullName>
    </recommendedName>
</protein>
<feature type="chain" id="PRO_0000367537" description="SAGA-associated factor 11">
    <location>
        <begin position="1"/>
        <end position="120"/>
    </location>
</feature>
<feature type="zinc finger region" description="SGF11-type" evidence="1">
    <location>
        <begin position="93"/>
        <end position="114"/>
    </location>
</feature>
<feature type="region of interest" description="Disordered" evidence="2">
    <location>
        <begin position="40"/>
        <end position="82"/>
    </location>
</feature>
<feature type="compositionally biased region" description="Low complexity" evidence="2">
    <location>
        <begin position="40"/>
        <end position="60"/>
    </location>
</feature>
<organism>
    <name type="scientific">Candida albicans (strain SC5314 / ATCC MYA-2876)</name>
    <name type="common">Yeast</name>
    <dbReference type="NCBI Taxonomy" id="237561"/>
    <lineage>
        <taxon>Eukaryota</taxon>
        <taxon>Fungi</taxon>
        <taxon>Dikarya</taxon>
        <taxon>Ascomycota</taxon>
        <taxon>Saccharomycotina</taxon>
        <taxon>Pichiomycetes</taxon>
        <taxon>Debaryomycetaceae</taxon>
        <taxon>Candida/Lodderomyces clade</taxon>
        <taxon>Candida</taxon>
    </lineage>
</organism>
<comment type="function">
    <text evidence="1">Functions as a component of the transcription regulatory histone acetylation (HAT) complex SAGA. At the promoters, SAGA is required for recruitment of the basal transcription machinery. It influences RNA polymerase II transcriptional activity through different activities such as TBP interaction and promoter selectivity, interaction with transcription activators, and chromatin modification through histone acetylation and deubiquitination. SAGA acetylates nucleosomal histone H3 to some extent (to form H3K9ac, H3K14ac, H3K18ac and H3K23ac). SAGA interacts with DNA via upstream activating sequences (UASs). Involved in transcriptional regulation of a subset of SAGA-regulated genes. Within the SAGA complex, participates in a subcomplex, that specifically deubiquitinates histones H2B.</text>
</comment>
<comment type="subunit">
    <text evidence="1">Component of the 1.8 MDa SAGA transcription coactivator-HAT complex. SAGA is built of 5 distinct domains with specialized functions. Within the SAGA complex, SUS1, SGF11, SGF73 and UBP8 form an additional subcomplex of SAGA called the DUB module (deubiquitination module). Interacts directly with SGF73, SUS1 and UBP8.</text>
</comment>
<comment type="subcellular location">
    <subcellularLocation>
        <location evidence="1">Nucleus</location>
    </subcellularLocation>
</comment>
<comment type="domain">
    <text evidence="1">The long N-terminal helix forms part of the 'assembly lobe' of the SAGA deubiquitination module.</text>
</comment>
<comment type="domain">
    <text evidence="1">The C-terminal SGF11-type zinc-finger domain together with the C-terminal catalytic domain of UBP8 forms the 'catalytic lobe' of the SAGA deubiquitination module.</text>
</comment>
<comment type="similarity">
    <text evidence="1">Belongs to the SGF11 family.</text>
</comment>
<reference key="1">
    <citation type="journal article" date="2004" name="Proc. Natl. Acad. Sci. U.S.A.">
        <title>The diploid genome sequence of Candida albicans.</title>
        <authorList>
            <person name="Jones T."/>
            <person name="Federspiel N.A."/>
            <person name="Chibana H."/>
            <person name="Dungan J."/>
            <person name="Kalman S."/>
            <person name="Magee B.B."/>
            <person name="Newport G."/>
            <person name="Thorstenson Y.R."/>
            <person name="Agabian N."/>
            <person name="Magee P.T."/>
            <person name="Davis R.W."/>
            <person name="Scherer S."/>
        </authorList>
    </citation>
    <scope>NUCLEOTIDE SEQUENCE [LARGE SCALE GENOMIC DNA]</scope>
    <source>
        <strain>SC5314 / ATCC MYA-2876</strain>
    </source>
</reference>
<reference key="2">
    <citation type="journal article" date="2007" name="Genome Biol.">
        <title>Assembly of the Candida albicans genome into sixteen supercontigs aligned on the eight chromosomes.</title>
        <authorList>
            <person name="van het Hoog M."/>
            <person name="Rast T.J."/>
            <person name="Martchenko M."/>
            <person name="Grindle S."/>
            <person name="Dignard D."/>
            <person name="Hogues H."/>
            <person name="Cuomo C."/>
            <person name="Berriman M."/>
            <person name="Scherer S."/>
            <person name="Magee B.B."/>
            <person name="Whiteway M."/>
            <person name="Chibana H."/>
            <person name="Nantel A."/>
            <person name="Magee P.T."/>
        </authorList>
    </citation>
    <scope>GENOME REANNOTATION</scope>
    <source>
        <strain>SC5314 / ATCC MYA-2876</strain>
    </source>
</reference>
<reference key="3">
    <citation type="journal article" date="2013" name="Genome Biol.">
        <title>Assembly of a phased diploid Candida albicans genome facilitates allele-specific measurements and provides a simple model for repeat and indel structure.</title>
        <authorList>
            <person name="Muzzey D."/>
            <person name="Schwartz K."/>
            <person name="Weissman J.S."/>
            <person name="Sherlock G."/>
        </authorList>
    </citation>
    <scope>NUCLEOTIDE SEQUENCE [LARGE SCALE GENOMIC DNA]</scope>
    <scope>GENOME REANNOTATION</scope>
    <source>
        <strain>SC5314 / ATCC MYA-2876</strain>
    </source>
</reference>
<gene>
    <name evidence="1" type="primary">SGF11</name>
    <name type="ordered locus">CAALFM_C305790CA</name>
    <name type="ORF">CaO19.7360</name>
</gene>
<name>SGF11_CANAL</name>
<keyword id="KW-0010">Activator</keyword>
<keyword id="KW-0156">Chromatin regulator</keyword>
<keyword id="KW-0479">Metal-binding</keyword>
<keyword id="KW-0539">Nucleus</keyword>
<keyword id="KW-1185">Reference proteome</keyword>
<keyword id="KW-0804">Transcription</keyword>
<keyword id="KW-0805">Transcription regulation</keyword>
<keyword id="KW-0862">Zinc</keyword>
<keyword id="KW-0863">Zinc-finger</keyword>
<sequence length="120" mass="13240">MTSTPITYKTLADSIFNDLINNIIKQHTLTSLTNIKDHSSLLNSSNSNTNSNTNGTIASNGGNGTTSDENNEIENSTIQDKSKLKQLETSRYFRCLNCGRNIAGGRFASHISKCLERKRK</sequence>
<dbReference type="EMBL" id="CP017625">
    <property type="protein sequence ID" value="AOW28588.1"/>
    <property type="molecule type" value="Genomic_DNA"/>
</dbReference>
<dbReference type="RefSeq" id="XP_019330875.1">
    <property type="nucleotide sequence ID" value="XM_019475330.1"/>
</dbReference>
<dbReference type="SMR" id="Q5A4H4"/>
<dbReference type="STRING" id="237561.Q5A4H4"/>
<dbReference type="EnsemblFungi" id="C3_05790C_A-T">
    <property type="protein sequence ID" value="C3_05790C_A-T-p1"/>
    <property type="gene ID" value="C3_05790C_A"/>
</dbReference>
<dbReference type="GeneID" id="3641753"/>
<dbReference type="KEGG" id="cal:CAALFM_C305790CA"/>
<dbReference type="CGD" id="CAL0000189519">
    <property type="gene designation" value="orf19.7360"/>
</dbReference>
<dbReference type="VEuPathDB" id="FungiDB:C3_05790C_A"/>
<dbReference type="HOGENOM" id="CLU_130538_0_0_1"/>
<dbReference type="InParanoid" id="Q5A4H4"/>
<dbReference type="OMA" id="RYFSCEN"/>
<dbReference type="OrthoDB" id="21557at2759"/>
<dbReference type="Proteomes" id="UP000000559">
    <property type="component" value="Chromosome 3"/>
</dbReference>
<dbReference type="GO" id="GO:0071819">
    <property type="term" value="C:DUBm complex"/>
    <property type="evidence" value="ECO:0007669"/>
    <property type="project" value="UniProtKB-UniRule"/>
</dbReference>
<dbReference type="GO" id="GO:0000124">
    <property type="term" value="C:SAGA complex"/>
    <property type="evidence" value="ECO:0007669"/>
    <property type="project" value="UniProtKB-UniRule"/>
</dbReference>
<dbReference type="GO" id="GO:0003713">
    <property type="term" value="F:transcription coactivator activity"/>
    <property type="evidence" value="ECO:0007669"/>
    <property type="project" value="UniProtKB-UniRule"/>
</dbReference>
<dbReference type="GO" id="GO:0008270">
    <property type="term" value="F:zinc ion binding"/>
    <property type="evidence" value="ECO:0007669"/>
    <property type="project" value="UniProtKB-UniRule"/>
</dbReference>
<dbReference type="GO" id="GO:0006325">
    <property type="term" value="P:chromatin organization"/>
    <property type="evidence" value="ECO:0007669"/>
    <property type="project" value="UniProtKB-KW"/>
</dbReference>
<dbReference type="Gene3D" id="3.30.160.60">
    <property type="entry name" value="Classic Zinc Finger"/>
    <property type="match status" value="1"/>
</dbReference>
<dbReference type="HAMAP" id="MF_03047">
    <property type="entry name" value="Sgf11"/>
    <property type="match status" value="1"/>
</dbReference>
<dbReference type="InterPro" id="IPR013246">
    <property type="entry name" value="SAGA_su_Sgf11"/>
</dbReference>
<dbReference type="Pfam" id="PF08209">
    <property type="entry name" value="Sgf11"/>
    <property type="match status" value="1"/>
</dbReference>
<evidence type="ECO:0000255" key="1">
    <source>
        <dbReference type="HAMAP-Rule" id="MF_03047"/>
    </source>
</evidence>
<evidence type="ECO:0000256" key="2">
    <source>
        <dbReference type="SAM" id="MobiDB-lite"/>
    </source>
</evidence>
<proteinExistence type="inferred from homology"/>
<accession>Q5A4H4</accession>
<accession>A0A1D8PKH7</accession>